<dbReference type="EMBL" id="AF199465">
    <property type="protein sequence ID" value="AAF12817.1"/>
    <property type="molecule type" value="mRNA"/>
</dbReference>
<dbReference type="SMR" id="Q9SNW8"/>
<dbReference type="GO" id="GO:0005634">
    <property type="term" value="C:nucleus"/>
    <property type="evidence" value="ECO:0007669"/>
    <property type="project" value="UniProtKB-SubCell"/>
</dbReference>
<dbReference type="GO" id="GO:0003700">
    <property type="term" value="F:DNA-binding transcription factor activity"/>
    <property type="evidence" value="ECO:0007669"/>
    <property type="project" value="InterPro"/>
</dbReference>
<dbReference type="GO" id="GO:0043565">
    <property type="term" value="F:sequence-specific DNA binding"/>
    <property type="evidence" value="ECO:0007669"/>
    <property type="project" value="TreeGrafter"/>
</dbReference>
<dbReference type="GO" id="GO:0048262">
    <property type="term" value="P:determination of dorsal/ventral asymmetry"/>
    <property type="evidence" value="ECO:0000315"/>
    <property type="project" value="UniProtKB"/>
</dbReference>
<dbReference type="GO" id="GO:0009908">
    <property type="term" value="P:flower development"/>
    <property type="evidence" value="ECO:0000315"/>
    <property type="project" value="UniProtKB"/>
</dbReference>
<dbReference type="GO" id="GO:2000032">
    <property type="term" value="P:regulation of secondary shoot formation"/>
    <property type="evidence" value="ECO:0007669"/>
    <property type="project" value="TreeGrafter"/>
</dbReference>
<dbReference type="InterPro" id="IPR017888">
    <property type="entry name" value="CYC/TB1_R_domain"/>
</dbReference>
<dbReference type="InterPro" id="IPR017887">
    <property type="entry name" value="TF_TCP_subgr"/>
</dbReference>
<dbReference type="InterPro" id="IPR005333">
    <property type="entry name" value="Transcription_factor_TCP"/>
</dbReference>
<dbReference type="PANTHER" id="PTHR31072:SF224">
    <property type="entry name" value="TRANSCRIPTION FACTOR TCP1"/>
    <property type="match status" value="1"/>
</dbReference>
<dbReference type="PANTHER" id="PTHR31072">
    <property type="entry name" value="TRANSCRIPTION FACTOR TCP4-RELATED"/>
    <property type="match status" value="1"/>
</dbReference>
<dbReference type="Pfam" id="PF03634">
    <property type="entry name" value="TCP"/>
    <property type="match status" value="1"/>
</dbReference>
<dbReference type="PROSITE" id="PS51370">
    <property type="entry name" value="R"/>
    <property type="match status" value="1"/>
</dbReference>
<dbReference type="PROSITE" id="PS51369">
    <property type="entry name" value="TCP"/>
    <property type="match status" value="1"/>
</dbReference>
<gene>
    <name type="primary">DICH</name>
</gene>
<protein>
    <recommendedName>
        <fullName>Transcription factor DICHOTOMA</fullName>
    </recommendedName>
</protein>
<feature type="chain" id="PRO_0000419438" description="Transcription factor DICHOTOMA">
    <location>
        <begin position="1"/>
        <end position="314"/>
    </location>
</feature>
<feature type="domain" description="TCP" evidence="1">
    <location>
        <begin position="87"/>
        <end position="145"/>
    </location>
</feature>
<feature type="domain" description="R" evidence="2">
    <location>
        <begin position="201"/>
        <end position="218"/>
    </location>
</feature>
<evidence type="ECO:0000255" key="1">
    <source>
        <dbReference type="PROSITE-ProRule" id="PRU00701"/>
    </source>
</evidence>
<evidence type="ECO:0000255" key="2">
    <source>
        <dbReference type="PROSITE-ProRule" id="PRU00702"/>
    </source>
</evidence>
<evidence type="ECO:0000269" key="3">
    <source>
    </source>
</evidence>
<comment type="function">
    <text evidence="3">Transcription regulator involved in the dorsovental asymmetry of flowers. Promotes dorsal identity.</text>
</comment>
<comment type="subcellular location">
    <subcellularLocation>
        <location evidence="1">Nucleus</location>
    </subcellularLocation>
</comment>
<comment type="developmental stage">
    <text evidence="3">First observed in a dorsal domain of floral meristems, prior to any morphological dorsoventral asymmetry. Later, expression becomes restricted to the most dorsal half of each dorsal petals.</text>
</comment>
<comment type="disruption phenotype">
    <text evidence="3">Petals are more symmetrical than in the wild type.</text>
</comment>
<accession>Q9SNW8</accession>
<name>DICH_ANTMA</name>
<proteinExistence type="evidence at transcript level"/>
<organism>
    <name type="scientific">Antirrhinum majus</name>
    <name type="common">Garden snapdragon</name>
    <dbReference type="NCBI Taxonomy" id="4151"/>
    <lineage>
        <taxon>Eukaryota</taxon>
        <taxon>Viridiplantae</taxon>
        <taxon>Streptophyta</taxon>
        <taxon>Embryophyta</taxon>
        <taxon>Tracheophyta</taxon>
        <taxon>Spermatophyta</taxon>
        <taxon>Magnoliopsida</taxon>
        <taxon>eudicotyledons</taxon>
        <taxon>Gunneridae</taxon>
        <taxon>Pentapetalae</taxon>
        <taxon>asterids</taxon>
        <taxon>lamiids</taxon>
        <taxon>Lamiales</taxon>
        <taxon>Plantaginaceae</taxon>
        <taxon>Antirrhineae</taxon>
        <taxon>Antirrhinum</taxon>
    </lineage>
</organism>
<keyword id="KW-0217">Developmental protein</keyword>
<keyword id="KW-0238">DNA-binding</keyword>
<keyword id="KW-0539">Nucleus</keyword>
<keyword id="KW-0804">Transcription</keyword>
<keyword id="KW-0805">Transcription regulation</keyword>
<sequence>MFNKKRYLQYPQVPPSLNPRASTSVVSLNGNEILLHHHDVISGYYLASNPQNLEPDALFNGFHHDVGGTNGDPLVLANTLAKKHTPKKDRHSKINRPQGPRDRRVRLSIGIARKFFDLQEMLGFDKPSKTLDWLLTKSKEAIKELVQSKSSKSNISNSPSECDQEVLSADLPYIGSSKGKAAVGLNSNKCKGGRDAVDLAKESRAKARARARERTKEKMCIKQLNQERNKSYEWNPSVLFQSKSSQQFEVSGPSTNYEELNQESIMIKRKLKQNHPSMFGFQPENATENWDYYSNFTSQSNQLCAILDQHKFIN</sequence>
<reference key="1">
    <citation type="journal article" date="1999" name="Cell">
        <title>Control of organ asymmetry in flowers of Antirrhinum.</title>
        <authorList>
            <person name="Luo D."/>
            <person name="Carpenter R."/>
            <person name="Copsey L."/>
            <person name="Vincent C."/>
            <person name="Clark J."/>
            <person name="Coen E."/>
        </authorList>
    </citation>
    <scope>NUCLEOTIDE SEQUENCE [MRNA]</scope>
    <scope>DEVELOPMENTAL STAGE</scope>
    <scope>FUNCTION</scope>
    <scope>DISRUPTION PHENOTYPE</scope>
</reference>